<keyword id="KW-1003">Cell membrane</keyword>
<keyword id="KW-0285">Flavoprotein</keyword>
<keyword id="KW-0288">FMN</keyword>
<keyword id="KW-0472">Membrane</keyword>
<keyword id="KW-0560">Oxidoreductase</keyword>
<keyword id="KW-0665">Pyrimidine biosynthesis</keyword>
<sequence length="336" mass="36832">MYYPLVRKALFQLDPERAHELTFRQLKRVSGTPLEFLVRQSVPTKPVSCMGLSFKNPVGLAAGLDKDGECIDALGAMGFGFIEVGTVTPRPQVGNDKPRLFRIVEAEGLINRMGFNNHGVDNLIENVKKSHFGGILGINIGKNKDTPVEQGKEDYLICMDKIYPYAGYIAINISSPNTPGLRSLQYGEALDDLLAAIKDKQTELHQRHHKYVPVAVKIAPDLTEEELIQIADSLVRHNIDGVIATNTTLDRSLIQGLNYCEQAGGLSGRPLQLRSTEVIHRLSQELKGRLPIIGVGGIDSVTAAREKMAAGASLIQIYSGFIFRGPGLIKNIVTHI</sequence>
<name>PYRD_YERPB</name>
<proteinExistence type="inferred from homology"/>
<reference key="1">
    <citation type="submission" date="2008-04" db="EMBL/GenBank/DDBJ databases">
        <title>Complete sequence of Yersinia pseudotuberculosis PB1/+.</title>
        <authorList>
            <person name="Copeland A."/>
            <person name="Lucas S."/>
            <person name="Lapidus A."/>
            <person name="Glavina del Rio T."/>
            <person name="Dalin E."/>
            <person name="Tice H."/>
            <person name="Bruce D."/>
            <person name="Goodwin L."/>
            <person name="Pitluck S."/>
            <person name="Munk A.C."/>
            <person name="Brettin T."/>
            <person name="Detter J.C."/>
            <person name="Han C."/>
            <person name="Tapia R."/>
            <person name="Schmutz J."/>
            <person name="Larimer F."/>
            <person name="Land M."/>
            <person name="Hauser L."/>
            <person name="Challacombe J.F."/>
            <person name="Green L."/>
            <person name="Lindler L.E."/>
            <person name="Nikolich M.P."/>
            <person name="Richardson P."/>
        </authorList>
    </citation>
    <scope>NUCLEOTIDE SEQUENCE [LARGE SCALE GENOMIC DNA]</scope>
    <source>
        <strain>PB1/+</strain>
    </source>
</reference>
<feature type="chain" id="PRO_1000100300" description="Dihydroorotate dehydrogenase (quinone)">
    <location>
        <begin position="1"/>
        <end position="336"/>
    </location>
</feature>
<feature type="active site" description="Nucleophile" evidence="1">
    <location>
        <position position="175"/>
    </location>
</feature>
<feature type="binding site" evidence="1">
    <location>
        <begin position="62"/>
        <end position="66"/>
    </location>
    <ligand>
        <name>FMN</name>
        <dbReference type="ChEBI" id="CHEBI:58210"/>
    </ligand>
</feature>
<feature type="binding site" evidence="1">
    <location>
        <position position="66"/>
    </location>
    <ligand>
        <name>substrate</name>
    </ligand>
</feature>
<feature type="binding site" evidence="1">
    <location>
        <position position="86"/>
    </location>
    <ligand>
        <name>FMN</name>
        <dbReference type="ChEBI" id="CHEBI:58210"/>
    </ligand>
</feature>
<feature type="binding site" evidence="1">
    <location>
        <begin position="111"/>
        <end position="115"/>
    </location>
    <ligand>
        <name>substrate</name>
    </ligand>
</feature>
<feature type="binding site" evidence="1">
    <location>
        <position position="139"/>
    </location>
    <ligand>
        <name>FMN</name>
        <dbReference type="ChEBI" id="CHEBI:58210"/>
    </ligand>
</feature>
<feature type="binding site" evidence="1">
    <location>
        <position position="172"/>
    </location>
    <ligand>
        <name>FMN</name>
        <dbReference type="ChEBI" id="CHEBI:58210"/>
    </ligand>
</feature>
<feature type="binding site" evidence="1">
    <location>
        <position position="172"/>
    </location>
    <ligand>
        <name>substrate</name>
    </ligand>
</feature>
<feature type="binding site" evidence="1">
    <location>
        <position position="177"/>
    </location>
    <ligand>
        <name>substrate</name>
    </ligand>
</feature>
<feature type="binding site" evidence="1">
    <location>
        <position position="217"/>
    </location>
    <ligand>
        <name>FMN</name>
        <dbReference type="ChEBI" id="CHEBI:58210"/>
    </ligand>
</feature>
<feature type="binding site" evidence="1">
    <location>
        <position position="245"/>
    </location>
    <ligand>
        <name>FMN</name>
        <dbReference type="ChEBI" id="CHEBI:58210"/>
    </ligand>
</feature>
<feature type="binding site" evidence="1">
    <location>
        <begin position="246"/>
        <end position="247"/>
    </location>
    <ligand>
        <name>substrate</name>
    </ligand>
</feature>
<feature type="binding site" evidence="1">
    <location>
        <position position="268"/>
    </location>
    <ligand>
        <name>FMN</name>
        <dbReference type="ChEBI" id="CHEBI:58210"/>
    </ligand>
</feature>
<feature type="binding site" evidence="1">
    <location>
        <position position="297"/>
    </location>
    <ligand>
        <name>FMN</name>
        <dbReference type="ChEBI" id="CHEBI:58210"/>
    </ligand>
</feature>
<feature type="binding site" evidence="1">
    <location>
        <begin position="318"/>
        <end position="319"/>
    </location>
    <ligand>
        <name>FMN</name>
        <dbReference type="ChEBI" id="CHEBI:58210"/>
    </ligand>
</feature>
<comment type="function">
    <text evidence="1">Catalyzes the conversion of dihydroorotate to orotate with quinone as electron acceptor.</text>
</comment>
<comment type="catalytic activity">
    <reaction evidence="1">
        <text>(S)-dihydroorotate + a quinone = orotate + a quinol</text>
        <dbReference type="Rhea" id="RHEA:30187"/>
        <dbReference type="ChEBI" id="CHEBI:24646"/>
        <dbReference type="ChEBI" id="CHEBI:30839"/>
        <dbReference type="ChEBI" id="CHEBI:30864"/>
        <dbReference type="ChEBI" id="CHEBI:132124"/>
        <dbReference type="EC" id="1.3.5.2"/>
    </reaction>
</comment>
<comment type="cofactor">
    <cofactor evidence="1">
        <name>FMN</name>
        <dbReference type="ChEBI" id="CHEBI:58210"/>
    </cofactor>
    <text evidence="1">Binds 1 FMN per subunit.</text>
</comment>
<comment type="pathway">
    <text evidence="1">Pyrimidine metabolism; UMP biosynthesis via de novo pathway; orotate from (S)-dihydroorotate (quinone route): step 1/1.</text>
</comment>
<comment type="subunit">
    <text evidence="1">Monomer.</text>
</comment>
<comment type="subcellular location">
    <subcellularLocation>
        <location evidence="1">Cell membrane</location>
        <topology evidence="1">Peripheral membrane protein</topology>
    </subcellularLocation>
</comment>
<comment type="similarity">
    <text evidence="1">Belongs to the dihydroorotate dehydrogenase family. Type 2 subfamily.</text>
</comment>
<protein>
    <recommendedName>
        <fullName evidence="1">Dihydroorotate dehydrogenase (quinone)</fullName>
        <ecNumber evidence="1">1.3.5.2</ecNumber>
    </recommendedName>
    <alternativeName>
        <fullName evidence="1">DHOdehase</fullName>
        <shortName evidence="1">DHOD</shortName>
        <shortName evidence="1">DHODase</shortName>
    </alternativeName>
    <alternativeName>
        <fullName evidence="1">Dihydroorotate oxidase</fullName>
    </alternativeName>
</protein>
<dbReference type="EC" id="1.3.5.2" evidence="1"/>
<dbReference type="EMBL" id="CP001048">
    <property type="protein sequence ID" value="ACC88515.1"/>
    <property type="molecule type" value="Genomic_DNA"/>
</dbReference>
<dbReference type="RefSeq" id="WP_002211296.1">
    <property type="nucleotide sequence ID" value="NZ_CP009780.1"/>
</dbReference>
<dbReference type="SMR" id="B2JYR8"/>
<dbReference type="GeneID" id="57977211"/>
<dbReference type="KEGG" id="ypb:YPTS_1543"/>
<dbReference type="PATRIC" id="fig|502801.10.peg.909"/>
<dbReference type="UniPathway" id="UPA00070">
    <property type="reaction ID" value="UER00946"/>
</dbReference>
<dbReference type="GO" id="GO:0005737">
    <property type="term" value="C:cytoplasm"/>
    <property type="evidence" value="ECO:0007669"/>
    <property type="project" value="InterPro"/>
</dbReference>
<dbReference type="GO" id="GO:0005886">
    <property type="term" value="C:plasma membrane"/>
    <property type="evidence" value="ECO:0007669"/>
    <property type="project" value="UniProtKB-SubCell"/>
</dbReference>
<dbReference type="GO" id="GO:0106430">
    <property type="term" value="F:dihydroorotate dehydrogenase (quinone) activity"/>
    <property type="evidence" value="ECO:0007669"/>
    <property type="project" value="UniProtKB-EC"/>
</dbReference>
<dbReference type="GO" id="GO:0006207">
    <property type="term" value="P:'de novo' pyrimidine nucleobase biosynthetic process"/>
    <property type="evidence" value="ECO:0007669"/>
    <property type="project" value="InterPro"/>
</dbReference>
<dbReference type="GO" id="GO:0044205">
    <property type="term" value="P:'de novo' UMP biosynthetic process"/>
    <property type="evidence" value="ECO:0007669"/>
    <property type="project" value="UniProtKB-UniRule"/>
</dbReference>
<dbReference type="CDD" id="cd04738">
    <property type="entry name" value="DHOD_2_like"/>
    <property type="match status" value="1"/>
</dbReference>
<dbReference type="FunFam" id="3.20.20.70:FF:000028">
    <property type="entry name" value="Dihydroorotate dehydrogenase (quinone)"/>
    <property type="match status" value="1"/>
</dbReference>
<dbReference type="Gene3D" id="3.20.20.70">
    <property type="entry name" value="Aldolase class I"/>
    <property type="match status" value="1"/>
</dbReference>
<dbReference type="HAMAP" id="MF_00225">
    <property type="entry name" value="DHO_dh_type2"/>
    <property type="match status" value="1"/>
</dbReference>
<dbReference type="InterPro" id="IPR013785">
    <property type="entry name" value="Aldolase_TIM"/>
</dbReference>
<dbReference type="InterPro" id="IPR050074">
    <property type="entry name" value="DHO_dehydrogenase"/>
</dbReference>
<dbReference type="InterPro" id="IPR012135">
    <property type="entry name" value="Dihydroorotate_DH_1_2"/>
</dbReference>
<dbReference type="InterPro" id="IPR005719">
    <property type="entry name" value="Dihydroorotate_DH_2"/>
</dbReference>
<dbReference type="InterPro" id="IPR005720">
    <property type="entry name" value="Dihydroorotate_DH_cat"/>
</dbReference>
<dbReference type="InterPro" id="IPR001295">
    <property type="entry name" value="Dihydroorotate_DH_CS"/>
</dbReference>
<dbReference type="NCBIfam" id="NF003644">
    <property type="entry name" value="PRK05286.1-1"/>
    <property type="match status" value="1"/>
</dbReference>
<dbReference type="NCBIfam" id="NF003645">
    <property type="entry name" value="PRK05286.1-2"/>
    <property type="match status" value="1"/>
</dbReference>
<dbReference type="NCBIfam" id="NF003646">
    <property type="entry name" value="PRK05286.1-4"/>
    <property type="match status" value="1"/>
</dbReference>
<dbReference type="NCBIfam" id="NF003652">
    <property type="entry name" value="PRK05286.2-5"/>
    <property type="match status" value="1"/>
</dbReference>
<dbReference type="NCBIfam" id="TIGR01036">
    <property type="entry name" value="pyrD_sub2"/>
    <property type="match status" value="1"/>
</dbReference>
<dbReference type="PANTHER" id="PTHR48109:SF4">
    <property type="entry name" value="DIHYDROOROTATE DEHYDROGENASE (QUINONE), MITOCHONDRIAL"/>
    <property type="match status" value="1"/>
</dbReference>
<dbReference type="PANTHER" id="PTHR48109">
    <property type="entry name" value="DIHYDROOROTATE DEHYDROGENASE (QUINONE), MITOCHONDRIAL-RELATED"/>
    <property type="match status" value="1"/>
</dbReference>
<dbReference type="Pfam" id="PF01180">
    <property type="entry name" value="DHO_dh"/>
    <property type="match status" value="1"/>
</dbReference>
<dbReference type="PIRSF" id="PIRSF000164">
    <property type="entry name" value="DHO_oxidase"/>
    <property type="match status" value="1"/>
</dbReference>
<dbReference type="SUPFAM" id="SSF51395">
    <property type="entry name" value="FMN-linked oxidoreductases"/>
    <property type="match status" value="1"/>
</dbReference>
<dbReference type="PROSITE" id="PS00911">
    <property type="entry name" value="DHODEHASE_1"/>
    <property type="match status" value="1"/>
</dbReference>
<dbReference type="PROSITE" id="PS00912">
    <property type="entry name" value="DHODEHASE_2"/>
    <property type="match status" value="1"/>
</dbReference>
<accession>B2JYR8</accession>
<evidence type="ECO:0000255" key="1">
    <source>
        <dbReference type="HAMAP-Rule" id="MF_00225"/>
    </source>
</evidence>
<gene>
    <name evidence="1" type="primary">pyrD</name>
    <name type="ordered locus">YPTS_1543</name>
</gene>
<organism>
    <name type="scientific">Yersinia pseudotuberculosis serotype IB (strain PB1/+)</name>
    <dbReference type="NCBI Taxonomy" id="502801"/>
    <lineage>
        <taxon>Bacteria</taxon>
        <taxon>Pseudomonadati</taxon>
        <taxon>Pseudomonadota</taxon>
        <taxon>Gammaproteobacteria</taxon>
        <taxon>Enterobacterales</taxon>
        <taxon>Yersiniaceae</taxon>
        <taxon>Yersinia</taxon>
    </lineage>
</organism>